<proteinExistence type="inferred from homology"/>
<dbReference type="EC" id="3.1.26.5" evidence="1"/>
<dbReference type="EMBL" id="M80817">
    <property type="protein sequence ID" value="AAA73147.1"/>
    <property type="molecule type" value="Genomic_DNA"/>
</dbReference>
<dbReference type="EMBL" id="AF008210">
    <property type="protein sequence ID" value="AAC38104.1"/>
    <property type="molecule type" value="Genomic_DNA"/>
</dbReference>
<dbReference type="EMBL" id="AE013218">
    <property type="protein sequence ID" value="AAM67586.1"/>
    <property type="molecule type" value="Genomic_DNA"/>
</dbReference>
<dbReference type="PIR" id="JC1155">
    <property type="entry name" value="JC1155"/>
</dbReference>
<dbReference type="RefSeq" id="WP_011053552.1">
    <property type="nucleotide sequence ID" value="NC_004061.1"/>
</dbReference>
<dbReference type="SMR" id="P29433"/>
<dbReference type="STRING" id="198804.BUsg_014"/>
<dbReference type="GeneID" id="93003476"/>
<dbReference type="KEGG" id="bas:BUsg_014"/>
<dbReference type="eggNOG" id="COG0594">
    <property type="taxonomic scope" value="Bacteria"/>
</dbReference>
<dbReference type="HOGENOM" id="CLU_117179_11_0_6"/>
<dbReference type="Proteomes" id="UP000000416">
    <property type="component" value="Chromosome"/>
</dbReference>
<dbReference type="GO" id="GO:0030677">
    <property type="term" value="C:ribonuclease P complex"/>
    <property type="evidence" value="ECO:0007669"/>
    <property type="project" value="TreeGrafter"/>
</dbReference>
<dbReference type="GO" id="GO:0042781">
    <property type="term" value="F:3'-tRNA processing endoribonuclease activity"/>
    <property type="evidence" value="ECO:0007669"/>
    <property type="project" value="TreeGrafter"/>
</dbReference>
<dbReference type="GO" id="GO:0004526">
    <property type="term" value="F:ribonuclease P activity"/>
    <property type="evidence" value="ECO:0007669"/>
    <property type="project" value="UniProtKB-UniRule"/>
</dbReference>
<dbReference type="GO" id="GO:0000049">
    <property type="term" value="F:tRNA binding"/>
    <property type="evidence" value="ECO:0007669"/>
    <property type="project" value="UniProtKB-UniRule"/>
</dbReference>
<dbReference type="GO" id="GO:0001682">
    <property type="term" value="P:tRNA 5'-leader removal"/>
    <property type="evidence" value="ECO:0007669"/>
    <property type="project" value="UniProtKB-UniRule"/>
</dbReference>
<dbReference type="Gene3D" id="3.30.230.10">
    <property type="match status" value="1"/>
</dbReference>
<dbReference type="HAMAP" id="MF_00227">
    <property type="entry name" value="RNase_P"/>
    <property type="match status" value="1"/>
</dbReference>
<dbReference type="InterPro" id="IPR020568">
    <property type="entry name" value="Ribosomal_Su5_D2-typ_SF"/>
</dbReference>
<dbReference type="InterPro" id="IPR014721">
    <property type="entry name" value="Ribsml_uS5_D2-typ_fold_subgr"/>
</dbReference>
<dbReference type="InterPro" id="IPR000100">
    <property type="entry name" value="RNase_P"/>
</dbReference>
<dbReference type="InterPro" id="IPR020539">
    <property type="entry name" value="RNase_P_CS"/>
</dbReference>
<dbReference type="NCBIfam" id="TIGR00188">
    <property type="entry name" value="rnpA"/>
    <property type="match status" value="1"/>
</dbReference>
<dbReference type="PANTHER" id="PTHR33992">
    <property type="entry name" value="RIBONUCLEASE P PROTEIN COMPONENT"/>
    <property type="match status" value="1"/>
</dbReference>
<dbReference type="PANTHER" id="PTHR33992:SF1">
    <property type="entry name" value="RIBONUCLEASE P PROTEIN COMPONENT"/>
    <property type="match status" value="1"/>
</dbReference>
<dbReference type="Pfam" id="PF00825">
    <property type="entry name" value="Ribonuclease_P"/>
    <property type="match status" value="1"/>
</dbReference>
<dbReference type="SUPFAM" id="SSF54211">
    <property type="entry name" value="Ribosomal protein S5 domain 2-like"/>
    <property type="match status" value="1"/>
</dbReference>
<dbReference type="PROSITE" id="PS00648">
    <property type="entry name" value="RIBONUCLEASE_P"/>
    <property type="match status" value="1"/>
</dbReference>
<name>RNPA_BUCAP</name>
<evidence type="ECO:0000255" key="1">
    <source>
        <dbReference type="HAMAP-Rule" id="MF_00227"/>
    </source>
</evidence>
<accession>P29433</accession>
<feature type="chain" id="PRO_0000198436" description="Ribonuclease P protein component">
    <location>
        <begin position="1"/>
        <end position="114"/>
    </location>
</feature>
<gene>
    <name evidence="1" type="primary">rnpA</name>
    <name type="ordered locus">BUsg_014</name>
</gene>
<organism>
    <name type="scientific">Buchnera aphidicola subsp. Schizaphis graminum (strain Sg)</name>
    <dbReference type="NCBI Taxonomy" id="198804"/>
    <lineage>
        <taxon>Bacteria</taxon>
        <taxon>Pseudomonadati</taxon>
        <taxon>Pseudomonadota</taxon>
        <taxon>Gammaproteobacteria</taxon>
        <taxon>Enterobacterales</taxon>
        <taxon>Erwiniaceae</taxon>
        <taxon>Buchnera</taxon>
    </lineage>
</organism>
<protein>
    <recommendedName>
        <fullName evidence="1">Ribonuclease P protein component</fullName>
        <shortName evidence="1">RNase P protein</shortName>
        <shortName evidence="1">RNaseP protein</shortName>
        <ecNumber evidence="1">3.1.26.5</ecNumber>
    </recommendedName>
    <alternativeName>
        <fullName evidence="1">Protein C5</fullName>
    </alternativeName>
</protein>
<comment type="function">
    <text evidence="1">RNaseP catalyzes the removal of the 5'-leader sequence from pre-tRNA to produce the mature 5'-terminus. It can also cleave other RNA substrates such as 4.5S RNA. The protein component plays an auxiliary but essential role in vivo by binding to the 5'-leader sequence and broadening the substrate specificity of the ribozyme.</text>
</comment>
<comment type="catalytic activity">
    <reaction evidence="1">
        <text>Endonucleolytic cleavage of RNA, removing 5'-extranucleotides from tRNA precursor.</text>
        <dbReference type="EC" id="3.1.26.5"/>
    </reaction>
</comment>
<comment type="subunit">
    <text evidence="1">Consists of a catalytic RNA component (M1 or rnpB) and a protein subunit.</text>
</comment>
<comment type="similarity">
    <text evidence="1">Belongs to the RnpA family.</text>
</comment>
<sequence length="114" mass="13784">MLNYFFKKKSKLLKSTNFQYVFSNPCNKNTFHINILGRSNLLGHPRLGLSISRKNIKHAYRRNKIKRLIRETFRLLQHRLISMDFVVIAKKNIVYLNNKKIVNILEYIWSNYQR</sequence>
<keyword id="KW-0255">Endonuclease</keyword>
<keyword id="KW-0378">Hydrolase</keyword>
<keyword id="KW-0540">Nuclease</keyword>
<keyword id="KW-0694">RNA-binding</keyword>
<keyword id="KW-0819">tRNA processing</keyword>
<reference key="1">
    <citation type="journal article" date="1992" name="Gene">
        <title>Genetic analysis of an aphid endosymbiont DNA fragment homologous to the rnpA-rpmH-dnaA-dnaN-gyrB region of eubacteria.</title>
        <authorList>
            <person name="Lai C.-Y."/>
            <person name="Baumann P."/>
        </authorList>
    </citation>
    <scope>NUCLEOTIDE SEQUENCE [GENOMIC DNA]</scope>
</reference>
<reference key="2">
    <citation type="journal article" date="1998" name="Curr. Microbiol.">
        <title>Sequence analysis of a 34.7-kb DNA segment from the genome of Buchnera aphidicola (endosymbiont of aphids) containing groEL, dnaA, the atp operon, gidA, and rho.</title>
        <authorList>
            <person name="Clark M.A."/>
            <person name="Baumann L."/>
            <person name="Baumann P."/>
        </authorList>
    </citation>
    <scope>NUCLEOTIDE SEQUENCE [GENOMIC DNA]</scope>
</reference>
<reference key="3">
    <citation type="journal article" date="2002" name="Science">
        <title>50 million years of genomic stasis in endosymbiotic bacteria.</title>
        <authorList>
            <person name="Tamas I."/>
            <person name="Klasson L."/>
            <person name="Canbaeck B."/>
            <person name="Naeslund A.K."/>
            <person name="Eriksson A.-S."/>
            <person name="Wernegreen J.J."/>
            <person name="Sandstroem J.P."/>
            <person name="Moran N.A."/>
            <person name="Andersson S.G.E."/>
        </authorList>
    </citation>
    <scope>NUCLEOTIDE SEQUENCE [LARGE SCALE GENOMIC DNA]</scope>
    <source>
        <strain>Sg</strain>
    </source>
</reference>